<evidence type="ECO:0000255" key="1">
    <source>
        <dbReference type="HAMAP-Rule" id="MF_00475"/>
    </source>
</evidence>
<comment type="function">
    <text evidence="1">This protein is an aporepressor. When complexed with L-tryptophan it binds the operator region of the trp operon and prevents the initiation of transcription.</text>
</comment>
<comment type="subunit">
    <text evidence="1">Homodimer.</text>
</comment>
<comment type="subcellular location">
    <subcellularLocation>
        <location evidence="1">Cytoplasm</location>
    </subcellularLocation>
</comment>
<comment type="similarity">
    <text evidence="1">Belongs to the TrpR family.</text>
</comment>
<keyword id="KW-0963">Cytoplasm</keyword>
<keyword id="KW-0238">DNA-binding</keyword>
<keyword id="KW-0678">Repressor</keyword>
<keyword id="KW-0804">Transcription</keyword>
<keyword id="KW-0805">Transcription regulation</keyword>
<proteinExistence type="inferred from homology"/>
<organism>
    <name type="scientific">Vibrio vulnificus (strain YJ016)</name>
    <dbReference type="NCBI Taxonomy" id="196600"/>
    <lineage>
        <taxon>Bacteria</taxon>
        <taxon>Pseudomonadati</taxon>
        <taxon>Pseudomonadota</taxon>
        <taxon>Gammaproteobacteria</taxon>
        <taxon>Vibrionales</taxon>
        <taxon>Vibrionaceae</taxon>
        <taxon>Vibrio</taxon>
    </lineage>
</organism>
<reference key="1">
    <citation type="journal article" date="2003" name="Genome Res.">
        <title>Comparative genome analysis of Vibrio vulnificus, a marine pathogen.</title>
        <authorList>
            <person name="Chen C.-Y."/>
            <person name="Wu K.-M."/>
            <person name="Chang Y.-C."/>
            <person name="Chang C.-H."/>
            <person name="Tsai H.-C."/>
            <person name="Liao T.-L."/>
            <person name="Liu Y.-M."/>
            <person name="Chen H.-J."/>
            <person name="Shen A.B.-T."/>
            <person name="Li J.-C."/>
            <person name="Su T.-L."/>
            <person name="Shao C.-P."/>
            <person name="Lee C.-T."/>
            <person name="Hor L.-I."/>
            <person name="Tsai S.-F."/>
        </authorList>
    </citation>
    <scope>NUCLEOTIDE SEQUENCE [LARGE SCALE GENOMIC DNA]</scope>
    <source>
        <strain>YJ016</strain>
    </source>
</reference>
<name>TRPR_VIBVY</name>
<feature type="chain" id="PRO_0000196517" description="Trp operon repressor homolog">
    <location>
        <begin position="1"/>
        <end position="102"/>
    </location>
</feature>
<feature type="DNA-binding region" evidence="1">
    <location>
        <begin position="59"/>
        <end position="82"/>
    </location>
</feature>
<dbReference type="EMBL" id="BA000037">
    <property type="protein sequence ID" value="BAC93471.1"/>
    <property type="molecule type" value="Genomic_DNA"/>
</dbReference>
<dbReference type="RefSeq" id="WP_011078578.1">
    <property type="nucleotide sequence ID" value="NC_005139.1"/>
</dbReference>
<dbReference type="SMR" id="Q7MNK8"/>
<dbReference type="STRING" id="672.VV93_v1c06440"/>
<dbReference type="GeneID" id="93894786"/>
<dbReference type="KEGG" id="vvy:VV0707"/>
<dbReference type="eggNOG" id="COG2973">
    <property type="taxonomic scope" value="Bacteria"/>
</dbReference>
<dbReference type="HOGENOM" id="CLU_147939_0_0_6"/>
<dbReference type="Proteomes" id="UP000002675">
    <property type="component" value="Chromosome I"/>
</dbReference>
<dbReference type="GO" id="GO:0005737">
    <property type="term" value="C:cytoplasm"/>
    <property type="evidence" value="ECO:0007669"/>
    <property type="project" value="UniProtKB-SubCell"/>
</dbReference>
<dbReference type="GO" id="GO:0003700">
    <property type="term" value="F:DNA-binding transcription factor activity"/>
    <property type="evidence" value="ECO:0007669"/>
    <property type="project" value="InterPro"/>
</dbReference>
<dbReference type="GO" id="GO:0043565">
    <property type="term" value="F:sequence-specific DNA binding"/>
    <property type="evidence" value="ECO:0007669"/>
    <property type="project" value="InterPro"/>
</dbReference>
<dbReference type="GO" id="GO:0045892">
    <property type="term" value="P:negative regulation of DNA-templated transcription"/>
    <property type="evidence" value="ECO:0007669"/>
    <property type="project" value="UniProtKB-UniRule"/>
</dbReference>
<dbReference type="Gene3D" id="1.10.1270.10">
    <property type="entry name" value="TrpR-like"/>
    <property type="match status" value="1"/>
</dbReference>
<dbReference type="HAMAP" id="MF_00475">
    <property type="entry name" value="Trp_repressor"/>
    <property type="match status" value="1"/>
</dbReference>
<dbReference type="InterPro" id="IPR000831">
    <property type="entry name" value="Trp_repress"/>
</dbReference>
<dbReference type="InterPro" id="IPR013335">
    <property type="entry name" value="Trp_repress_bac"/>
</dbReference>
<dbReference type="InterPro" id="IPR010921">
    <property type="entry name" value="Trp_repressor/repl_initiator"/>
</dbReference>
<dbReference type="InterPro" id="IPR038116">
    <property type="entry name" value="TrpR-like_sf"/>
</dbReference>
<dbReference type="NCBIfam" id="TIGR01321">
    <property type="entry name" value="TrpR"/>
    <property type="match status" value="1"/>
</dbReference>
<dbReference type="PANTHER" id="PTHR38025">
    <property type="entry name" value="TRP OPERON REPRESSOR"/>
    <property type="match status" value="1"/>
</dbReference>
<dbReference type="PANTHER" id="PTHR38025:SF1">
    <property type="entry name" value="TRP OPERON REPRESSOR"/>
    <property type="match status" value="1"/>
</dbReference>
<dbReference type="Pfam" id="PF01371">
    <property type="entry name" value="Trp_repressor"/>
    <property type="match status" value="1"/>
</dbReference>
<dbReference type="PIRSF" id="PIRSF003196">
    <property type="entry name" value="Trp_repressor"/>
    <property type="match status" value="1"/>
</dbReference>
<dbReference type="SUPFAM" id="SSF48295">
    <property type="entry name" value="TrpR-like"/>
    <property type="match status" value="1"/>
</dbReference>
<sequence>MSQQPEYTDWQQIVDLVKHSVEQKQHDMLLTMLMTPDEREALVSRVNIVRELLKGELSQRQISQMLGVGIATITRGSNELKLKSDEDKARLNQLLEGTKKGG</sequence>
<protein>
    <recommendedName>
        <fullName evidence="1">Trp operon repressor homolog</fullName>
    </recommendedName>
</protein>
<accession>Q7MNK8</accession>
<gene>
    <name evidence="1" type="primary">trpR</name>
    <name type="ordered locus">VV0707</name>
</gene>